<organism>
    <name type="scientific">Ureaplasma parvum serovar 3 (strain ATCC 700970)</name>
    <dbReference type="NCBI Taxonomy" id="273119"/>
    <lineage>
        <taxon>Bacteria</taxon>
        <taxon>Bacillati</taxon>
        <taxon>Mycoplasmatota</taxon>
        <taxon>Mycoplasmoidales</taxon>
        <taxon>Mycoplasmoidaceae</taxon>
        <taxon>Ureaplasma</taxon>
    </lineage>
</organism>
<gene>
    <name evidence="1" type="primary">rplD</name>
    <name evidence="1" type="synonym">rpl4</name>
    <name type="ordered locus">UU232</name>
</gene>
<name>RL4_UREPA</name>
<proteinExistence type="inferred from homology"/>
<dbReference type="EMBL" id="AF222894">
    <property type="protein sequence ID" value="AAF30641.1"/>
    <property type="molecule type" value="Genomic_DNA"/>
</dbReference>
<dbReference type="RefSeq" id="WP_006688823.1">
    <property type="nucleotide sequence ID" value="NC_002162.1"/>
</dbReference>
<dbReference type="SMR" id="Q9PQQ9"/>
<dbReference type="STRING" id="273119.UU232"/>
<dbReference type="EnsemblBacteria" id="AAF30641">
    <property type="protein sequence ID" value="AAF30641"/>
    <property type="gene ID" value="UU232"/>
</dbReference>
<dbReference type="GeneID" id="29672617"/>
<dbReference type="KEGG" id="uur:UU232"/>
<dbReference type="eggNOG" id="COG0088">
    <property type="taxonomic scope" value="Bacteria"/>
</dbReference>
<dbReference type="HOGENOM" id="CLU_041575_5_2_14"/>
<dbReference type="OrthoDB" id="9803201at2"/>
<dbReference type="Proteomes" id="UP000000423">
    <property type="component" value="Chromosome"/>
</dbReference>
<dbReference type="GO" id="GO:1990904">
    <property type="term" value="C:ribonucleoprotein complex"/>
    <property type="evidence" value="ECO:0007669"/>
    <property type="project" value="UniProtKB-KW"/>
</dbReference>
<dbReference type="GO" id="GO:0005840">
    <property type="term" value="C:ribosome"/>
    <property type="evidence" value="ECO:0007669"/>
    <property type="project" value="UniProtKB-KW"/>
</dbReference>
<dbReference type="GO" id="GO:0019843">
    <property type="term" value="F:rRNA binding"/>
    <property type="evidence" value="ECO:0007669"/>
    <property type="project" value="UniProtKB-UniRule"/>
</dbReference>
<dbReference type="GO" id="GO:0003735">
    <property type="term" value="F:structural constituent of ribosome"/>
    <property type="evidence" value="ECO:0007669"/>
    <property type="project" value="InterPro"/>
</dbReference>
<dbReference type="GO" id="GO:0006412">
    <property type="term" value="P:translation"/>
    <property type="evidence" value="ECO:0007669"/>
    <property type="project" value="UniProtKB-UniRule"/>
</dbReference>
<dbReference type="Gene3D" id="3.40.1370.10">
    <property type="match status" value="1"/>
</dbReference>
<dbReference type="HAMAP" id="MF_01328_B">
    <property type="entry name" value="Ribosomal_uL4_B"/>
    <property type="match status" value="1"/>
</dbReference>
<dbReference type="InterPro" id="IPR002136">
    <property type="entry name" value="Ribosomal_uL4"/>
</dbReference>
<dbReference type="InterPro" id="IPR013005">
    <property type="entry name" value="Ribosomal_uL4-like"/>
</dbReference>
<dbReference type="InterPro" id="IPR023574">
    <property type="entry name" value="Ribosomal_uL4_dom_sf"/>
</dbReference>
<dbReference type="NCBIfam" id="TIGR03953">
    <property type="entry name" value="rplD_bact"/>
    <property type="match status" value="1"/>
</dbReference>
<dbReference type="PANTHER" id="PTHR10746">
    <property type="entry name" value="50S RIBOSOMAL PROTEIN L4"/>
    <property type="match status" value="1"/>
</dbReference>
<dbReference type="PANTHER" id="PTHR10746:SF6">
    <property type="entry name" value="LARGE RIBOSOMAL SUBUNIT PROTEIN UL4M"/>
    <property type="match status" value="1"/>
</dbReference>
<dbReference type="Pfam" id="PF00573">
    <property type="entry name" value="Ribosomal_L4"/>
    <property type="match status" value="1"/>
</dbReference>
<dbReference type="SUPFAM" id="SSF52166">
    <property type="entry name" value="Ribosomal protein L4"/>
    <property type="match status" value="1"/>
</dbReference>
<accession>Q9PQQ9</accession>
<evidence type="ECO:0000255" key="1">
    <source>
        <dbReference type="HAMAP-Rule" id="MF_01328"/>
    </source>
</evidence>
<evidence type="ECO:0000256" key="2">
    <source>
        <dbReference type="SAM" id="MobiDB-lite"/>
    </source>
</evidence>
<evidence type="ECO:0000305" key="3"/>
<comment type="function">
    <text evidence="1">One of the primary rRNA binding proteins, this protein initially binds near the 5'-end of the 23S rRNA. It is important during the early stages of 50S assembly. It makes multiple contacts with different domains of the 23S rRNA in the assembled 50S subunit and ribosome.</text>
</comment>
<comment type="function">
    <text evidence="1">Forms part of the polypeptide exit tunnel.</text>
</comment>
<comment type="subunit">
    <text evidence="1">Part of the 50S ribosomal subunit.</text>
</comment>
<comment type="similarity">
    <text evidence="1">Belongs to the universal ribosomal protein uL4 family.</text>
</comment>
<feature type="chain" id="PRO_0000129307" description="Large ribosomal subunit protein uL4">
    <location>
        <begin position="1"/>
        <end position="211"/>
    </location>
</feature>
<feature type="region of interest" description="Disordered" evidence="2">
    <location>
        <begin position="44"/>
        <end position="90"/>
    </location>
</feature>
<feature type="compositionally biased region" description="Basic residues" evidence="2">
    <location>
        <begin position="60"/>
        <end position="72"/>
    </location>
</feature>
<keyword id="KW-1185">Reference proteome</keyword>
<keyword id="KW-0687">Ribonucleoprotein</keyword>
<keyword id="KW-0689">Ribosomal protein</keyword>
<keyword id="KW-0694">RNA-binding</keyword>
<keyword id="KW-0699">rRNA-binding</keyword>
<sequence>MAKIKLLSIDGNFAKELEVTSDLFVEVPHKQAMFDSVLAENAAERQGTHSTLTKGEVRGGGKKPWRQKHTGKARTGSTRNPHWTGGGVVFGPKPNRNYNLKVNAKVRLLAFKSALTIKLNEGKMLGLVANSDLETPSTKKMVNFINNANLENQKVLLVIVDNFSNIKKSTNNLQKVTTKLWYQVSVRDLMHANVVVVAEEAFTNYARKVSK</sequence>
<reference key="1">
    <citation type="journal article" date="2000" name="Nature">
        <title>The complete sequence of the mucosal pathogen Ureaplasma urealyticum.</title>
        <authorList>
            <person name="Glass J.I."/>
            <person name="Lefkowitz E.J."/>
            <person name="Glass J.S."/>
            <person name="Heiner C.R."/>
            <person name="Chen E.Y."/>
            <person name="Cassell G.H."/>
        </authorList>
    </citation>
    <scope>NUCLEOTIDE SEQUENCE [LARGE SCALE GENOMIC DNA]</scope>
    <source>
        <strain>ATCC 700970</strain>
    </source>
</reference>
<protein>
    <recommendedName>
        <fullName evidence="1">Large ribosomal subunit protein uL4</fullName>
    </recommendedName>
    <alternativeName>
        <fullName evidence="3">50S ribosomal protein L4</fullName>
    </alternativeName>
</protein>